<sequence>MKRAVVVFSGGQDSTTCLVQALQQYDEVHCVTFDYGQRHRAEIDVARELALKLGARAHKVLDVTLLNELAVSSLTRDSIPVPDYEPEADGIPNTFVPGRNILFLTLAAIYAYQVKAEAVITGVCETDFSGYPDCRDEFVKALNHAVSLGMAKDIRFETPLMWIDKAETWALADYYGKLDLVRNETLTCYNGIKGDGCGHCAACNLRANGLNHYLADKPTVMAAMKQKTGLK</sequence>
<organism>
    <name type="scientific">Escherichia coli O7:K1 (strain IAI39 / ExPEC)</name>
    <dbReference type="NCBI Taxonomy" id="585057"/>
    <lineage>
        <taxon>Bacteria</taxon>
        <taxon>Pseudomonadati</taxon>
        <taxon>Pseudomonadota</taxon>
        <taxon>Gammaproteobacteria</taxon>
        <taxon>Enterobacterales</taxon>
        <taxon>Enterobacteriaceae</taxon>
        <taxon>Escherichia</taxon>
    </lineage>
</organism>
<reference key="1">
    <citation type="journal article" date="2009" name="PLoS Genet.">
        <title>Organised genome dynamics in the Escherichia coli species results in highly diverse adaptive paths.</title>
        <authorList>
            <person name="Touchon M."/>
            <person name="Hoede C."/>
            <person name="Tenaillon O."/>
            <person name="Barbe V."/>
            <person name="Baeriswyl S."/>
            <person name="Bidet P."/>
            <person name="Bingen E."/>
            <person name="Bonacorsi S."/>
            <person name="Bouchier C."/>
            <person name="Bouvet O."/>
            <person name="Calteau A."/>
            <person name="Chiapello H."/>
            <person name="Clermont O."/>
            <person name="Cruveiller S."/>
            <person name="Danchin A."/>
            <person name="Diard M."/>
            <person name="Dossat C."/>
            <person name="Karoui M.E."/>
            <person name="Frapy E."/>
            <person name="Garry L."/>
            <person name="Ghigo J.M."/>
            <person name="Gilles A.M."/>
            <person name="Johnson J."/>
            <person name="Le Bouguenec C."/>
            <person name="Lescat M."/>
            <person name="Mangenot S."/>
            <person name="Martinez-Jehanne V."/>
            <person name="Matic I."/>
            <person name="Nassif X."/>
            <person name="Oztas S."/>
            <person name="Petit M.A."/>
            <person name="Pichon C."/>
            <person name="Rouy Z."/>
            <person name="Ruf C.S."/>
            <person name="Schneider D."/>
            <person name="Tourret J."/>
            <person name="Vacherie B."/>
            <person name="Vallenet D."/>
            <person name="Medigue C."/>
            <person name="Rocha E.P.C."/>
            <person name="Denamur E."/>
        </authorList>
    </citation>
    <scope>NUCLEOTIDE SEQUENCE [LARGE SCALE GENOMIC DNA]</scope>
    <source>
        <strain>IAI39 / ExPEC</strain>
    </source>
</reference>
<proteinExistence type="inferred from homology"/>
<comment type="function">
    <text evidence="1">Catalyzes the ATP-dependent conversion of 7-carboxy-7-deazaguanine (CDG) to 7-cyano-7-deazaguanine (preQ(0)).</text>
</comment>
<comment type="catalytic activity">
    <reaction evidence="1">
        <text>7-carboxy-7-deazaguanine + NH4(+) + ATP = 7-cyano-7-deazaguanine + ADP + phosphate + H2O + H(+)</text>
        <dbReference type="Rhea" id="RHEA:27982"/>
        <dbReference type="ChEBI" id="CHEBI:15377"/>
        <dbReference type="ChEBI" id="CHEBI:15378"/>
        <dbReference type="ChEBI" id="CHEBI:28938"/>
        <dbReference type="ChEBI" id="CHEBI:30616"/>
        <dbReference type="ChEBI" id="CHEBI:43474"/>
        <dbReference type="ChEBI" id="CHEBI:45075"/>
        <dbReference type="ChEBI" id="CHEBI:61036"/>
        <dbReference type="ChEBI" id="CHEBI:456216"/>
        <dbReference type="EC" id="6.3.4.20"/>
    </reaction>
</comment>
<comment type="cofactor">
    <cofactor evidence="1">
        <name>Zn(2+)</name>
        <dbReference type="ChEBI" id="CHEBI:29105"/>
    </cofactor>
    <text evidence="1">Binds 1 zinc ion per subunit.</text>
</comment>
<comment type="pathway">
    <text evidence="1">Purine metabolism; 7-cyano-7-deazaguanine biosynthesis.</text>
</comment>
<comment type="similarity">
    <text evidence="1">Belongs to the QueC family.</text>
</comment>
<name>QUEC_ECO7I</name>
<accession>B7NJ50</accession>
<protein>
    <recommendedName>
        <fullName evidence="1">7-cyano-7-deazaguanine synthase</fullName>
        <ecNumber evidence="1">6.3.4.20</ecNumber>
    </recommendedName>
    <alternativeName>
        <fullName evidence="1">7-cyano-7-carbaguanine synthase</fullName>
    </alternativeName>
    <alternativeName>
        <fullName evidence="1">PreQ(0) synthase</fullName>
    </alternativeName>
    <alternativeName>
        <fullName evidence="1">Queuosine biosynthesis protein QueC</fullName>
    </alternativeName>
</protein>
<evidence type="ECO:0000255" key="1">
    <source>
        <dbReference type="HAMAP-Rule" id="MF_01633"/>
    </source>
</evidence>
<dbReference type="EC" id="6.3.4.20" evidence="1"/>
<dbReference type="EMBL" id="CU928164">
    <property type="protein sequence ID" value="CAR16369.1"/>
    <property type="molecule type" value="Genomic_DNA"/>
</dbReference>
<dbReference type="RefSeq" id="WP_000817227.1">
    <property type="nucleotide sequence ID" value="NC_011750.1"/>
</dbReference>
<dbReference type="RefSeq" id="YP_002406273.1">
    <property type="nucleotide sequence ID" value="NC_011750.1"/>
</dbReference>
<dbReference type="SMR" id="B7NJ50"/>
<dbReference type="STRING" id="585057.ECIAI39_0229"/>
<dbReference type="GeneID" id="86862989"/>
<dbReference type="KEGG" id="ect:ECIAI39_0229"/>
<dbReference type="PATRIC" id="fig|585057.6.peg.247"/>
<dbReference type="HOGENOM" id="CLU_081854_0_0_6"/>
<dbReference type="UniPathway" id="UPA00391"/>
<dbReference type="Proteomes" id="UP000000749">
    <property type="component" value="Chromosome"/>
</dbReference>
<dbReference type="GO" id="GO:0005524">
    <property type="term" value="F:ATP binding"/>
    <property type="evidence" value="ECO:0007669"/>
    <property type="project" value="UniProtKB-UniRule"/>
</dbReference>
<dbReference type="GO" id="GO:0016879">
    <property type="term" value="F:ligase activity, forming carbon-nitrogen bonds"/>
    <property type="evidence" value="ECO:0007669"/>
    <property type="project" value="UniProtKB-UniRule"/>
</dbReference>
<dbReference type="GO" id="GO:0008270">
    <property type="term" value="F:zinc ion binding"/>
    <property type="evidence" value="ECO:0007669"/>
    <property type="project" value="UniProtKB-UniRule"/>
</dbReference>
<dbReference type="GO" id="GO:0008616">
    <property type="term" value="P:queuosine biosynthetic process"/>
    <property type="evidence" value="ECO:0007669"/>
    <property type="project" value="UniProtKB-UniRule"/>
</dbReference>
<dbReference type="CDD" id="cd01995">
    <property type="entry name" value="QueC-like"/>
    <property type="match status" value="1"/>
</dbReference>
<dbReference type="FunFam" id="3.40.50.620:FF:000017">
    <property type="entry name" value="7-cyano-7-deazaguanine synthase"/>
    <property type="match status" value="1"/>
</dbReference>
<dbReference type="Gene3D" id="3.40.50.620">
    <property type="entry name" value="HUPs"/>
    <property type="match status" value="1"/>
</dbReference>
<dbReference type="HAMAP" id="MF_01633">
    <property type="entry name" value="QueC"/>
    <property type="match status" value="1"/>
</dbReference>
<dbReference type="InterPro" id="IPR018317">
    <property type="entry name" value="QueC"/>
</dbReference>
<dbReference type="InterPro" id="IPR014729">
    <property type="entry name" value="Rossmann-like_a/b/a_fold"/>
</dbReference>
<dbReference type="NCBIfam" id="TIGR00364">
    <property type="entry name" value="7-cyano-7-deazaguanine synthase QueC"/>
    <property type="match status" value="1"/>
</dbReference>
<dbReference type="NCBIfam" id="NF008317">
    <property type="entry name" value="PRK11106.1"/>
    <property type="match status" value="1"/>
</dbReference>
<dbReference type="PANTHER" id="PTHR42914">
    <property type="entry name" value="7-CYANO-7-DEAZAGUANINE SYNTHASE"/>
    <property type="match status" value="1"/>
</dbReference>
<dbReference type="PANTHER" id="PTHR42914:SF1">
    <property type="entry name" value="7-CYANO-7-DEAZAGUANINE SYNTHASE"/>
    <property type="match status" value="1"/>
</dbReference>
<dbReference type="Pfam" id="PF06508">
    <property type="entry name" value="QueC"/>
    <property type="match status" value="1"/>
</dbReference>
<dbReference type="PIRSF" id="PIRSF006293">
    <property type="entry name" value="ExsB"/>
    <property type="match status" value="1"/>
</dbReference>
<dbReference type="SUPFAM" id="SSF52402">
    <property type="entry name" value="Adenine nucleotide alpha hydrolases-like"/>
    <property type="match status" value="1"/>
</dbReference>
<feature type="chain" id="PRO_1000186591" description="7-cyano-7-deazaguanine synthase">
    <location>
        <begin position="1"/>
        <end position="231"/>
    </location>
</feature>
<feature type="binding site" evidence="1">
    <location>
        <begin position="8"/>
        <end position="18"/>
    </location>
    <ligand>
        <name>ATP</name>
        <dbReference type="ChEBI" id="CHEBI:30616"/>
    </ligand>
</feature>
<feature type="binding site" evidence="1">
    <location>
        <position position="188"/>
    </location>
    <ligand>
        <name>Zn(2+)</name>
        <dbReference type="ChEBI" id="CHEBI:29105"/>
    </ligand>
</feature>
<feature type="binding site" evidence="1">
    <location>
        <position position="197"/>
    </location>
    <ligand>
        <name>Zn(2+)</name>
        <dbReference type="ChEBI" id="CHEBI:29105"/>
    </ligand>
</feature>
<feature type="binding site" evidence="1">
    <location>
        <position position="200"/>
    </location>
    <ligand>
        <name>Zn(2+)</name>
        <dbReference type="ChEBI" id="CHEBI:29105"/>
    </ligand>
</feature>
<feature type="binding site" evidence="1">
    <location>
        <position position="203"/>
    </location>
    <ligand>
        <name>Zn(2+)</name>
        <dbReference type="ChEBI" id="CHEBI:29105"/>
    </ligand>
</feature>
<gene>
    <name evidence="1" type="primary">queC</name>
    <name type="ordered locus">ECIAI39_0229</name>
</gene>
<keyword id="KW-0067">ATP-binding</keyword>
<keyword id="KW-0436">Ligase</keyword>
<keyword id="KW-0479">Metal-binding</keyword>
<keyword id="KW-0547">Nucleotide-binding</keyword>
<keyword id="KW-0671">Queuosine biosynthesis</keyword>
<keyword id="KW-0862">Zinc</keyword>